<keyword id="KW-0963">Cytoplasm</keyword>
<keyword id="KW-0236">DNA replication inhibitor</keyword>
<keyword id="KW-0238">DNA-binding</keyword>
<keyword id="KW-1185">Reference proteome</keyword>
<comment type="function">
    <text evidence="1">Negative regulator of replication initiation, which contributes to regulation of DNA replication and ensures that replication initiation occurs exactly once per chromosome per cell cycle. Binds to pairs of hemimethylated GATC sequences in the oriC region, thus preventing assembly of replication proteins and re-initiation at newly replicated origins. Repression is relieved when the region becomes fully methylated.</text>
</comment>
<comment type="subunit">
    <text evidence="1">Homodimer. Polymerizes to form helical filaments.</text>
</comment>
<comment type="subcellular location">
    <subcellularLocation>
        <location evidence="1">Cytoplasm</location>
    </subcellularLocation>
</comment>
<comment type="similarity">
    <text evidence="1">Belongs to the SeqA family.</text>
</comment>
<feature type="chain" id="PRO_0000413944" description="Negative modulator of initiation of replication">
    <location>
        <begin position="1"/>
        <end position="180"/>
    </location>
</feature>
<feature type="region of interest" description="Interaction with DNA" evidence="1">
    <location>
        <begin position="115"/>
        <end position="119"/>
    </location>
</feature>
<sequence length="180" mass="20208">MKTIEVDEELYRFIASQTQHIGESASDILRRLLMQSSPSDLAVSAPVEVQKKGIVVSKDAGKEASVDRVKAVRTLLISDEFSALDKAIDRFLTVLSELYKIDSKAFSEATEVKGRTRVYFADNQETLIASGKTTKPREIVGTPFWVITNTNTNRKRHMVELLMERMGFQHDLTEKVCAAI</sequence>
<organism>
    <name type="scientific">Aliivibrio fischeri (strain ATCC 700601 / ES114)</name>
    <name type="common">Vibrio fischeri</name>
    <dbReference type="NCBI Taxonomy" id="312309"/>
    <lineage>
        <taxon>Bacteria</taxon>
        <taxon>Pseudomonadati</taxon>
        <taxon>Pseudomonadota</taxon>
        <taxon>Gammaproteobacteria</taxon>
        <taxon>Vibrionales</taxon>
        <taxon>Vibrionaceae</taxon>
        <taxon>Aliivibrio</taxon>
    </lineage>
</organism>
<accession>Q5E6N6</accession>
<evidence type="ECO:0000255" key="1">
    <source>
        <dbReference type="HAMAP-Rule" id="MF_00908"/>
    </source>
</evidence>
<name>SEQA_ALIF1</name>
<dbReference type="EMBL" id="CP000020">
    <property type="protein sequence ID" value="AAW85310.1"/>
    <property type="molecule type" value="Genomic_DNA"/>
</dbReference>
<dbReference type="RefSeq" id="WP_005418290.1">
    <property type="nucleotide sequence ID" value="NZ_CAWLES010000001.1"/>
</dbReference>
<dbReference type="RefSeq" id="YP_204198.1">
    <property type="nucleotide sequence ID" value="NC_006840.2"/>
</dbReference>
<dbReference type="SMR" id="Q5E6N6"/>
<dbReference type="STRING" id="312309.VF_0815"/>
<dbReference type="EnsemblBacteria" id="AAW85310">
    <property type="protein sequence ID" value="AAW85310"/>
    <property type="gene ID" value="VF_0815"/>
</dbReference>
<dbReference type="GeneID" id="54163483"/>
<dbReference type="KEGG" id="vfi:VF_0815"/>
<dbReference type="PATRIC" id="fig|312309.11.peg.808"/>
<dbReference type="eggNOG" id="COG3057">
    <property type="taxonomic scope" value="Bacteria"/>
</dbReference>
<dbReference type="HOGENOM" id="CLU_099733_0_0_6"/>
<dbReference type="OrthoDB" id="5591069at2"/>
<dbReference type="Proteomes" id="UP000000537">
    <property type="component" value="Chromosome I"/>
</dbReference>
<dbReference type="GO" id="GO:0005737">
    <property type="term" value="C:cytoplasm"/>
    <property type="evidence" value="ECO:0007669"/>
    <property type="project" value="UniProtKB-SubCell"/>
</dbReference>
<dbReference type="GO" id="GO:0003677">
    <property type="term" value="F:DNA binding"/>
    <property type="evidence" value="ECO:0007669"/>
    <property type="project" value="UniProtKB-UniRule"/>
</dbReference>
<dbReference type="GO" id="GO:0032297">
    <property type="term" value="P:negative regulation of DNA-templated DNA replication initiation"/>
    <property type="evidence" value="ECO:0007669"/>
    <property type="project" value="UniProtKB-UniRule"/>
</dbReference>
<dbReference type="GO" id="GO:0006355">
    <property type="term" value="P:regulation of DNA-templated transcription"/>
    <property type="evidence" value="ECO:0007669"/>
    <property type="project" value="InterPro"/>
</dbReference>
<dbReference type="Gene3D" id="1.10.1220.10">
    <property type="entry name" value="Met repressor-like"/>
    <property type="match status" value="1"/>
</dbReference>
<dbReference type="Gene3D" id="1.20.1380.10">
    <property type="entry name" value="Replication modulator SeqA, C-terminal DNA-binding domain"/>
    <property type="match status" value="1"/>
</dbReference>
<dbReference type="HAMAP" id="MF_00908">
    <property type="entry name" value="SeqA"/>
    <property type="match status" value="1"/>
</dbReference>
<dbReference type="InterPro" id="IPR013321">
    <property type="entry name" value="Arc_rbn_hlx_hlx"/>
</dbReference>
<dbReference type="InterPro" id="IPR010985">
    <property type="entry name" value="Ribbon_hlx_hlx"/>
</dbReference>
<dbReference type="InterPro" id="IPR005621">
    <property type="entry name" value="SeqA"/>
</dbReference>
<dbReference type="InterPro" id="IPR026577">
    <property type="entry name" value="SeqA_DNA-bd_C"/>
</dbReference>
<dbReference type="InterPro" id="IPR036835">
    <property type="entry name" value="SeqA_DNA-bd_C_sf"/>
</dbReference>
<dbReference type="InterPro" id="IPR033761">
    <property type="entry name" value="SeqA_N"/>
</dbReference>
<dbReference type="NCBIfam" id="NF008389">
    <property type="entry name" value="PRK11187.1"/>
    <property type="match status" value="1"/>
</dbReference>
<dbReference type="Pfam" id="PF03925">
    <property type="entry name" value="SeqA"/>
    <property type="match status" value="1"/>
</dbReference>
<dbReference type="Pfam" id="PF17206">
    <property type="entry name" value="SeqA_N"/>
    <property type="match status" value="1"/>
</dbReference>
<dbReference type="PIRSF" id="PIRSF019401">
    <property type="entry name" value="SeqA"/>
    <property type="match status" value="1"/>
</dbReference>
<dbReference type="SUPFAM" id="SSF82808">
    <property type="entry name" value="Replication modulator SeqA, C-terminal DNA-binding domain"/>
    <property type="match status" value="1"/>
</dbReference>
<dbReference type="SUPFAM" id="SSF47598">
    <property type="entry name" value="Ribbon-helix-helix"/>
    <property type="match status" value="1"/>
</dbReference>
<protein>
    <recommendedName>
        <fullName evidence="1">Negative modulator of initiation of replication</fullName>
    </recommendedName>
</protein>
<proteinExistence type="inferred from homology"/>
<gene>
    <name evidence="1" type="primary">seqA</name>
    <name type="ordered locus">VF_0815</name>
</gene>
<reference key="1">
    <citation type="journal article" date="2005" name="Proc. Natl. Acad. Sci. U.S.A.">
        <title>Complete genome sequence of Vibrio fischeri: a symbiotic bacterium with pathogenic congeners.</title>
        <authorList>
            <person name="Ruby E.G."/>
            <person name="Urbanowski M."/>
            <person name="Campbell J."/>
            <person name="Dunn A."/>
            <person name="Faini M."/>
            <person name="Gunsalus R."/>
            <person name="Lostroh P."/>
            <person name="Lupp C."/>
            <person name="McCann J."/>
            <person name="Millikan D."/>
            <person name="Schaefer A."/>
            <person name="Stabb E."/>
            <person name="Stevens A."/>
            <person name="Visick K."/>
            <person name="Whistler C."/>
            <person name="Greenberg E.P."/>
        </authorList>
    </citation>
    <scope>NUCLEOTIDE SEQUENCE [LARGE SCALE GENOMIC DNA]</scope>
    <source>
        <strain>ATCC 700601 / ES114</strain>
    </source>
</reference>